<evidence type="ECO:0000255" key="1">
    <source>
        <dbReference type="HAMAP-Rule" id="MF_01694"/>
    </source>
</evidence>
<evidence type="ECO:0000255" key="2">
    <source>
        <dbReference type="PROSITE-ProRule" id="PRU01266"/>
    </source>
</evidence>
<comment type="function">
    <text evidence="1">Catalyzes the conversion of dethiobiotin (DTB) to biotin by the insertion of a sulfur atom into dethiobiotin via a radical-based mechanism.</text>
</comment>
<comment type="catalytic activity">
    <reaction evidence="1">
        <text>(4R,5S)-dethiobiotin + (sulfur carrier)-SH + 2 reduced [2Fe-2S]-[ferredoxin] + 2 S-adenosyl-L-methionine = (sulfur carrier)-H + biotin + 2 5'-deoxyadenosine + 2 L-methionine + 2 oxidized [2Fe-2S]-[ferredoxin]</text>
        <dbReference type="Rhea" id="RHEA:22060"/>
        <dbReference type="Rhea" id="RHEA-COMP:10000"/>
        <dbReference type="Rhea" id="RHEA-COMP:10001"/>
        <dbReference type="Rhea" id="RHEA-COMP:14737"/>
        <dbReference type="Rhea" id="RHEA-COMP:14739"/>
        <dbReference type="ChEBI" id="CHEBI:17319"/>
        <dbReference type="ChEBI" id="CHEBI:29917"/>
        <dbReference type="ChEBI" id="CHEBI:33737"/>
        <dbReference type="ChEBI" id="CHEBI:33738"/>
        <dbReference type="ChEBI" id="CHEBI:57586"/>
        <dbReference type="ChEBI" id="CHEBI:57844"/>
        <dbReference type="ChEBI" id="CHEBI:59789"/>
        <dbReference type="ChEBI" id="CHEBI:64428"/>
        <dbReference type="ChEBI" id="CHEBI:149473"/>
        <dbReference type="EC" id="2.8.1.6"/>
    </reaction>
</comment>
<comment type="cofactor">
    <cofactor evidence="1">
        <name>[4Fe-4S] cluster</name>
        <dbReference type="ChEBI" id="CHEBI:49883"/>
    </cofactor>
    <text evidence="1">Binds 1 [4Fe-4S] cluster. The cluster is coordinated with 3 cysteines and an exchangeable S-adenosyl-L-methionine.</text>
</comment>
<comment type="cofactor">
    <cofactor evidence="1">
        <name>[2Fe-2S] cluster</name>
        <dbReference type="ChEBI" id="CHEBI:190135"/>
    </cofactor>
    <text evidence="1">Binds 1 [2Fe-2S] cluster. The cluster is coordinated with 3 cysteines and 1 arginine.</text>
</comment>
<comment type="pathway">
    <text evidence="1">Cofactor biosynthesis; biotin biosynthesis; biotin from 7,8-diaminononanoate: step 2/2.</text>
</comment>
<comment type="subunit">
    <text evidence="1">Homodimer.</text>
</comment>
<comment type="similarity">
    <text evidence="1">Belongs to the radical SAM superfamily. Biotin synthase family.</text>
</comment>
<reference key="1">
    <citation type="submission" date="2005-09" db="EMBL/GenBank/DDBJ databases">
        <title>Complete sequence of chromosome 1 of Rhodobacter sphaeroides 2.4.1.</title>
        <authorList>
            <person name="Copeland A."/>
            <person name="Lucas S."/>
            <person name="Lapidus A."/>
            <person name="Barry K."/>
            <person name="Detter J.C."/>
            <person name="Glavina T."/>
            <person name="Hammon N."/>
            <person name="Israni S."/>
            <person name="Pitluck S."/>
            <person name="Richardson P."/>
            <person name="Mackenzie C."/>
            <person name="Choudhary M."/>
            <person name="Larimer F."/>
            <person name="Hauser L.J."/>
            <person name="Land M."/>
            <person name="Donohue T.J."/>
            <person name="Kaplan S."/>
        </authorList>
    </citation>
    <scope>NUCLEOTIDE SEQUENCE [LARGE SCALE GENOMIC DNA]</scope>
    <source>
        <strain>ATCC 17023 / DSM 158 / JCM 6121 / CCUG 31486 / LMG 2827 / NBRC 12203 / NCIMB 8253 / ATH 2.4.1.</strain>
    </source>
</reference>
<organism>
    <name type="scientific">Cereibacter sphaeroides (strain ATCC 17023 / DSM 158 / JCM 6121 / CCUG 31486 / LMG 2827 / NBRC 12203 / NCIMB 8253 / ATH 2.4.1.)</name>
    <name type="common">Rhodobacter sphaeroides</name>
    <dbReference type="NCBI Taxonomy" id="272943"/>
    <lineage>
        <taxon>Bacteria</taxon>
        <taxon>Pseudomonadati</taxon>
        <taxon>Pseudomonadota</taxon>
        <taxon>Alphaproteobacteria</taxon>
        <taxon>Rhodobacterales</taxon>
        <taxon>Paracoccaceae</taxon>
        <taxon>Cereibacter</taxon>
    </lineage>
</organism>
<sequence>MIRPALRTDWTLEEARAIHALPFPELMHRAQTLHRAHFDPTAIETASLLSIKTGGCPEDCGYCSQSAHHDTGVKATKLMGTEEVLAAARRAKAAGAQRFCMGAAWRSPKDRDMDRLCDMVRGVADLGLETCMTLGMLSPGQVARLKAAGLDFYNHNIDTSPAYYARIASTRTMEDRLETVEQVRRGGIKVCCGGILGMGEAEEDRIALLVTLATLPAHPDSVPVNLWNEIEGVPVQGRAQAVDPFALVRIVALARILMPASVVRLSAGRTEMSDELQALCFLAGANSIFVGDQLLTTGNPAAWKDRDLLSRLGLHVAPARARPPVAAD</sequence>
<name>BIOB_CERS4</name>
<feature type="chain" id="PRO_0000381587" description="Biotin synthase">
    <location>
        <begin position="1"/>
        <end position="328"/>
    </location>
</feature>
<feature type="domain" description="Radical SAM core" evidence="2">
    <location>
        <begin position="41"/>
        <end position="260"/>
    </location>
</feature>
<feature type="binding site" evidence="1">
    <location>
        <position position="56"/>
    </location>
    <ligand>
        <name>[4Fe-4S] cluster</name>
        <dbReference type="ChEBI" id="CHEBI:49883"/>
        <note>4Fe-4S-S-AdoMet</note>
    </ligand>
</feature>
<feature type="binding site" evidence="1">
    <location>
        <position position="60"/>
    </location>
    <ligand>
        <name>[4Fe-4S] cluster</name>
        <dbReference type="ChEBI" id="CHEBI:49883"/>
        <note>4Fe-4S-S-AdoMet</note>
    </ligand>
</feature>
<feature type="binding site" evidence="1">
    <location>
        <position position="63"/>
    </location>
    <ligand>
        <name>[4Fe-4S] cluster</name>
        <dbReference type="ChEBI" id="CHEBI:49883"/>
        <note>4Fe-4S-S-AdoMet</note>
    </ligand>
</feature>
<feature type="binding site" evidence="1">
    <location>
        <position position="100"/>
    </location>
    <ligand>
        <name>[2Fe-2S] cluster</name>
        <dbReference type="ChEBI" id="CHEBI:190135"/>
    </ligand>
</feature>
<feature type="binding site" evidence="1">
    <location>
        <position position="131"/>
    </location>
    <ligand>
        <name>[2Fe-2S] cluster</name>
        <dbReference type="ChEBI" id="CHEBI:190135"/>
    </ligand>
</feature>
<feature type="binding site" evidence="1">
    <location>
        <position position="191"/>
    </location>
    <ligand>
        <name>[2Fe-2S] cluster</name>
        <dbReference type="ChEBI" id="CHEBI:190135"/>
    </ligand>
</feature>
<feature type="binding site" evidence="1">
    <location>
        <position position="264"/>
    </location>
    <ligand>
        <name>[2Fe-2S] cluster</name>
        <dbReference type="ChEBI" id="CHEBI:190135"/>
    </ligand>
</feature>
<gene>
    <name evidence="1" type="primary">bioB</name>
    <name type="ordered locus">RHOS4_05050</name>
    <name type="ORF">RSP_1923</name>
</gene>
<accession>Q3J561</accession>
<proteinExistence type="inferred from homology"/>
<keyword id="KW-0001">2Fe-2S</keyword>
<keyword id="KW-0004">4Fe-4S</keyword>
<keyword id="KW-0093">Biotin biosynthesis</keyword>
<keyword id="KW-0408">Iron</keyword>
<keyword id="KW-0411">Iron-sulfur</keyword>
<keyword id="KW-0479">Metal-binding</keyword>
<keyword id="KW-1185">Reference proteome</keyword>
<keyword id="KW-0949">S-adenosyl-L-methionine</keyword>
<keyword id="KW-0808">Transferase</keyword>
<dbReference type="EC" id="2.8.1.6" evidence="1"/>
<dbReference type="EMBL" id="CP000143">
    <property type="protein sequence ID" value="ABA78073.1"/>
    <property type="molecule type" value="Genomic_DNA"/>
</dbReference>
<dbReference type="RefSeq" id="WP_011337080.1">
    <property type="nucleotide sequence ID" value="NC_007493.2"/>
</dbReference>
<dbReference type="RefSeq" id="YP_351974.1">
    <property type="nucleotide sequence ID" value="NC_007493.2"/>
</dbReference>
<dbReference type="SMR" id="Q3J561"/>
<dbReference type="STRING" id="272943.RSP_1923"/>
<dbReference type="EnsemblBacteria" id="ABA78073">
    <property type="protein sequence ID" value="ABA78073"/>
    <property type="gene ID" value="RSP_1923"/>
</dbReference>
<dbReference type="GeneID" id="3719232"/>
<dbReference type="KEGG" id="rsp:RSP_1923"/>
<dbReference type="PATRIC" id="fig|272943.9.peg.814"/>
<dbReference type="eggNOG" id="COG0502">
    <property type="taxonomic scope" value="Bacteria"/>
</dbReference>
<dbReference type="OrthoDB" id="9786826at2"/>
<dbReference type="PhylomeDB" id="Q3J561"/>
<dbReference type="UniPathway" id="UPA00078">
    <property type="reaction ID" value="UER00162"/>
</dbReference>
<dbReference type="Proteomes" id="UP000002703">
    <property type="component" value="Chromosome 1"/>
</dbReference>
<dbReference type="GO" id="GO:0051537">
    <property type="term" value="F:2 iron, 2 sulfur cluster binding"/>
    <property type="evidence" value="ECO:0007669"/>
    <property type="project" value="UniProtKB-KW"/>
</dbReference>
<dbReference type="GO" id="GO:0051539">
    <property type="term" value="F:4 iron, 4 sulfur cluster binding"/>
    <property type="evidence" value="ECO:0007669"/>
    <property type="project" value="UniProtKB-KW"/>
</dbReference>
<dbReference type="GO" id="GO:0004076">
    <property type="term" value="F:biotin synthase activity"/>
    <property type="evidence" value="ECO:0007669"/>
    <property type="project" value="UniProtKB-UniRule"/>
</dbReference>
<dbReference type="GO" id="GO:0005506">
    <property type="term" value="F:iron ion binding"/>
    <property type="evidence" value="ECO:0007669"/>
    <property type="project" value="UniProtKB-UniRule"/>
</dbReference>
<dbReference type="GO" id="GO:0009102">
    <property type="term" value="P:biotin biosynthetic process"/>
    <property type="evidence" value="ECO:0007669"/>
    <property type="project" value="UniProtKB-UniRule"/>
</dbReference>
<dbReference type="CDD" id="cd01335">
    <property type="entry name" value="Radical_SAM"/>
    <property type="match status" value="1"/>
</dbReference>
<dbReference type="Gene3D" id="3.20.20.70">
    <property type="entry name" value="Aldolase class I"/>
    <property type="match status" value="1"/>
</dbReference>
<dbReference type="HAMAP" id="MF_01694">
    <property type="entry name" value="BioB"/>
    <property type="match status" value="1"/>
</dbReference>
<dbReference type="InterPro" id="IPR013785">
    <property type="entry name" value="Aldolase_TIM"/>
</dbReference>
<dbReference type="InterPro" id="IPR010722">
    <property type="entry name" value="BATS_dom"/>
</dbReference>
<dbReference type="InterPro" id="IPR002684">
    <property type="entry name" value="Biotin_synth/BioAB"/>
</dbReference>
<dbReference type="InterPro" id="IPR024177">
    <property type="entry name" value="Biotin_synthase"/>
</dbReference>
<dbReference type="InterPro" id="IPR006638">
    <property type="entry name" value="Elp3/MiaA/NifB-like_rSAM"/>
</dbReference>
<dbReference type="InterPro" id="IPR007197">
    <property type="entry name" value="rSAM"/>
</dbReference>
<dbReference type="NCBIfam" id="TIGR00433">
    <property type="entry name" value="bioB"/>
    <property type="match status" value="1"/>
</dbReference>
<dbReference type="PANTHER" id="PTHR22976">
    <property type="entry name" value="BIOTIN SYNTHASE"/>
    <property type="match status" value="1"/>
</dbReference>
<dbReference type="PANTHER" id="PTHR22976:SF2">
    <property type="entry name" value="BIOTIN SYNTHASE, MITOCHONDRIAL"/>
    <property type="match status" value="1"/>
</dbReference>
<dbReference type="Pfam" id="PF06968">
    <property type="entry name" value="BATS"/>
    <property type="match status" value="1"/>
</dbReference>
<dbReference type="Pfam" id="PF04055">
    <property type="entry name" value="Radical_SAM"/>
    <property type="match status" value="1"/>
</dbReference>
<dbReference type="PIRSF" id="PIRSF001619">
    <property type="entry name" value="Biotin_synth"/>
    <property type="match status" value="1"/>
</dbReference>
<dbReference type="SFLD" id="SFLDF00272">
    <property type="entry name" value="biotin_synthase"/>
    <property type="match status" value="1"/>
</dbReference>
<dbReference type="SFLD" id="SFLDS00029">
    <property type="entry name" value="Radical_SAM"/>
    <property type="match status" value="1"/>
</dbReference>
<dbReference type="SMART" id="SM00876">
    <property type="entry name" value="BATS"/>
    <property type="match status" value="1"/>
</dbReference>
<dbReference type="SMART" id="SM00729">
    <property type="entry name" value="Elp3"/>
    <property type="match status" value="1"/>
</dbReference>
<dbReference type="SUPFAM" id="SSF102114">
    <property type="entry name" value="Radical SAM enzymes"/>
    <property type="match status" value="1"/>
</dbReference>
<dbReference type="PROSITE" id="PS51918">
    <property type="entry name" value="RADICAL_SAM"/>
    <property type="match status" value="1"/>
</dbReference>
<protein>
    <recommendedName>
        <fullName evidence="1">Biotin synthase</fullName>
        <ecNumber evidence="1">2.8.1.6</ecNumber>
    </recommendedName>
</protein>